<comment type="function">
    <text evidence="1">Catalyzes the conversion of dopaminechrome to 5,6-dihydroxyindole in the eumelanin biosynthetic pathway originating from dopamine (PubMed:34388859). Catalyzes tautomerization of dopaminechrome to 5,6-dihydroxyindole during eumelanin biosynthesis (PubMed:34388859). Acts both dopaminechrome and N-methyl dopaminechrome but not on dopachrome or other aminochromes tested (PubMed:34388859).</text>
</comment>
<comment type="catalytic activity">
    <reaction evidence="1">
        <text>dopaminechrome = 5,6-dihydroxyindole</text>
        <dbReference type="Rhea" id="RHEA:70199"/>
        <dbReference type="ChEBI" id="CHEBI:27404"/>
        <dbReference type="ChEBI" id="CHEBI:189002"/>
    </reaction>
</comment>
<comment type="pathway">
    <text evidence="1">Pigment biosynthesis; melanin biosynthesis.</text>
</comment>
<comment type="subcellular location">
    <subcellularLocation>
        <location evidence="3">Secreted</location>
    </subcellularLocation>
</comment>
<comment type="similarity">
    <text evidence="3">Belongs to the major royal jelly protein family.</text>
</comment>
<comment type="sequence caution" evidence="3">
    <conflict type="frameshift">
        <sequence resource="EMBL-CDS" id="AAL48736"/>
    </conflict>
</comment>
<organism>
    <name type="scientific">Drosophila melanogaster</name>
    <name type="common">Fruit fly</name>
    <dbReference type="NCBI Taxonomy" id="7227"/>
    <lineage>
        <taxon>Eukaryota</taxon>
        <taxon>Metazoa</taxon>
        <taxon>Ecdysozoa</taxon>
        <taxon>Arthropoda</taxon>
        <taxon>Hexapoda</taxon>
        <taxon>Insecta</taxon>
        <taxon>Pterygota</taxon>
        <taxon>Neoptera</taxon>
        <taxon>Endopterygota</taxon>
        <taxon>Diptera</taxon>
        <taxon>Brachycera</taxon>
        <taxon>Muscomorpha</taxon>
        <taxon>Ephydroidea</taxon>
        <taxon>Drosophilidae</taxon>
        <taxon>Drosophila</taxon>
        <taxon>Sophophora</taxon>
    </lineage>
</organism>
<reference key="1">
    <citation type="journal article" date="2000" name="Science">
        <title>The genome sequence of Drosophila melanogaster.</title>
        <authorList>
            <person name="Adams M.D."/>
            <person name="Celniker S.E."/>
            <person name="Holt R.A."/>
            <person name="Evans C.A."/>
            <person name="Gocayne J.D."/>
            <person name="Amanatides P.G."/>
            <person name="Scherer S.E."/>
            <person name="Li P.W."/>
            <person name="Hoskins R.A."/>
            <person name="Galle R.F."/>
            <person name="George R.A."/>
            <person name="Lewis S.E."/>
            <person name="Richards S."/>
            <person name="Ashburner M."/>
            <person name="Henderson S.N."/>
            <person name="Sutton G.G."/>
            <person name="Wortman J.R."/>
            <person name="Yandell M.D."/>
            <person name="Zhang Q."/>
            <person name="Chen L.X."/>
            <person name="Brandon R.C."/>
            <person name="Rogers Y.-H.C."/>
            <person name="Blazej R.G."/>
            <person name="Champe M."/>
            <person name="Pfeiffer B.D."/>
            <person name="Wan K.H."/>
            <person name="Doyle C."/>
            <person name="Baxter E.G."/>
            <person name="Helt G."/>
            <person name="Nelson C.R."/>
            <person name="Miklos G.L.G."/>
            <person name="Abril J.F."/>
            <person name="Agbayani A."/>
            <person name="An H.-J."/>
            <person name="Andrews-Pfannkoch C."/>
            <person name="Baldwin D."/>
            <person name="Ballew R.M."/>
            <person name="Basu A."/>
            <person name="Baxendale J."/>
            <person name="Bayraktaroglu L."/>
            <person name="Beasley E.M."/>
            <person name="Beeson K.Y."/>
            <person name="Benos P.V."/>
            <person name="Berman B.P."/>
            <person name="Bhandari D."/>
            <person name="Bolshakov S."/>
            <person name="Borkova D."/>
            <person name="Botchan M.R."/>
            <person name="Bouck J."/>
            <person name="Brokstein P."/>
            <person name="Brottier P."/>
            <person name="Burtis K.C."/>
            <person name="Busam D.A."/>
            <person name="Butler H."/>
            <person name="Cadieu E."/>
            <person name="Center A."/>
            <person name="Chandra I."/>
            <person name="Cherry J.M."/>
            <person name="Cawley S."/>
            <person name="Dahlke C."/>
            <person name="Davenport L.B."/>
            <person name="Davies P."/>
            <person name="de Pablos B."/>
            <person name="Delcher A."/>
            <person name="Deng Z."/>
            <person name="Mays A.D."/>
            <person name="Dew I."/>
            <person name="Dietz S.M."/>
            <person name="Dodson K."/>
            <person name="Doup L.E."/>
            <person name="Downes M."/>
            <person name="Dugan-Rocha S."/>
            <person name="Dunkov B.C."/>
            <person name="Dunn P."/>
            <person name="Durbin K.J."/>
            <person name="Evangelista C.C."/>
            <person name="Ferraz C."/>
            <person name="Ferriera S."/>
            <person name="Fleischmann W."/>
            <person name="Fosler C."/>
            <person name="Gabrielian A.E."/>
            <person name="Garg N.S."/>
            <person name="Gelbart W.M."/>
            <person name="Glasser K."/>
            <person name="Glodek A."/>
            <person name="Gong F."/>
            <person name="Gorrell J.H."/>
            <person name="Gu Z."/>
            <person name="Guan P."/>
            <person name="Harris M."/>
            <person name="Harris N.L."/>
            <person name="Harvey D.A."/>
            <person name="Heiman T.J."/>
            <person name="Hernandez J.R."/>
            <person name="Houck J."/>
            <person name="Hostin D."/>
            <person name="Houston K.A."/>
            <person name="Howland T.J."/>
            <person name="Wei M.-H."/>
            <person name="Ibegwam C."/>
            <person name="Jalali M."/>
            <person name="Kalush F."/>
            <person name="Karpen G.H."/>
            <person name="Ke Z."/>
            <person name="Kennison J.A."/>
            <person name="Ketchum K.A."/>
            <person name="Kimmel B.E."/>
            <person name="Kodira C.D."/>
            <person name="Kraft C.L."/>
            <person name="Kravitz S."/>
            <person name="Kulp D."/>
            <person name="Lai Z."/>
            <person name="Lasko P."/>
            <person name="Lei Y."/>
            <person name="Levitsky A.A."/>
            <person name="Li J.H."/>
            <person name="Li Z."/>
            <person name="Liang Y."/>
            <person name="Lin X."/>
            <person name="Liu X."/>
            <person name="Mattei B."/>
            <person name="McIntosh T.C."/>
            <person name="McLeod M.P."/>
            <person name="McPherson D."/>
            <person name="Merkulov G."/>
            <person name="Milshina N.V."/>
            <person name="Mobarry C."/>
            <person name="Morris J."/>
            <person name="Moshrefi A."/>
            <person name="Mount S.M."/>
            <person name="Moy M."/>
            <person name="Murphy B."/>
            <person name="Murphy L."/>
            <person name="Muzny D.M."/>
            <person name="Nelson D.L."/>
            <person name="Nelson D.R."/>
            <person name="Nelson K.A."/>
            <person name="Nixon K."/>
            <person name="Nusskern D.R."/>
            <person name="Pacleb J.M."/>
            <person name="Palazzolo M."/>
            <person name="Pittman G.S."/>
            <person name="Pan S."/>
            <person name="Pollard J."/>
            <person name="Puri V."/>
            <person name="Reese M.G."/>
            <person name="Reinert K."/>
            <person name="Remington K."/>
            <person name="Saunders R.D.C."/>
            <person name="Scheeler F."/>
            <person name="Shen H."/>
            <person name="Shue B.C."/>
            <person name="Siden-Kiamos I."/>
            <person name="Simpson M."/>
            <person name="Skupski M.P."/>
            <person name="Smith T.J."/>
            <person name="Spier E."/>
            <person name="Spradling A.C."/>
            <person name="Stapleton M."/>
            <person name="Strong R."/>
            <person name="Sun E."/>
            <person name="Svirskas R."/>
            <person name="Tector C."/>
            <person name="Turner R."/>
            <person name="Venter E."/>
            <person name="Wang A.H."/>
            <person name="Wang X."/>
            <person name="Wang Z.-Y."/>
            <person name="Wassarman D.A."/>
            <person name="Weinstock G.M."/>
            <person name="Weissenbach J."/>
            <person name="Williams S.M."/>
            <person name="Woodage T."/>
            <person name="Worley K.C."/>
            <person name="Wu D."/>
            <person name="Yang S."/>
            <person name="Yao Q.A."/>
            <person name="Ye J."/>
            <person name="Yeh R.-F."/>
            <person name="Zaveri J.S."/>
            <person name="Zhan M."/>
            <person name="Zhang G."/>
            <person name="Zhao Q."/>
            <person name="Zheng L."/>
            <person name="Zheng X.H."/>
            <person name="Zhong F.N."/>
            <person name="Zhong W."/>
            <person name="Zhou X."/>
            <person name="Zhu S.C."/>
            <person name="Zhu X."/>
            <person name="Smith H.O."/>
            <person name="Gibbs R.A."/>
            <person name="Myers E.W."/>
            <person name="Rubin G.M."/>
            <person name="Venter J.C."/>
        </authorList>
    </citation>
    <scope>NUCLEOTIDE SEQUENCE [LARGE SCALE GENOMIC DNA]</scope>
    <source>
        <strain>Berkeley</strain>
    </source>
</reference>
<reference key="2">
    <citation type="journal article" date="2002" name="Genome Biol.">
        <title>Annotation of the Drosophila melanogaster euchromatic genome: a systematic review.</title>
        <authorList>
            <person name="Misra S."/>
            <person name="Crosby M.A."/>
            <person name="Mungall C.J."/>
            <person name="Matthews B.B."/>
            <person name="Campbell K.S."/>
            <person name="Hradecky P."/>
            <person name="Huang Y."/>
            <person name="Kaminker J.S."/>
            <person name="Millburn G.H."/>
            <person name="Prochnik S.E."/>
            <person name="Smith C.D."/>
            <person name="Tupy J.L."/>
            <person name="Whitfield E.J."/>
            <person name="Bayraktaroglu L."/>
            <person name="Berman B.P."/>
            <person name="Bettencourt B.R."/>
            <person name="Celniker S.E."/>
            <person name="de Grey A.D.N.J."/>
            <person name="Drysdale R.A."/>
            <person name="Harris N.L."/>
            <person name="Richter J."/>
            <person name="Russo S."/>
            <person name="Schroeder A.J."/>
            <person name="Shu S.Q."/>
            <person name="Stapleton M."/>
            <person name="Yamada C."/>
            <person name="Ashburner M."/>
            <person name="Gelbart W.M."/>
            <person name="Rubin G.M."/>
            <person name="Lewis S.E."/>
        </authorList>
    </citation>
    <scope>GENOME REANNOTATION</scope>
    <source>
        <strain>Berkeley</strain>
    </source>
</reference>
<reference key="3">
    <citation type="journal article" date="2002" name="Genome Biol.">
        <title>A Drosophila full-length cDNA resource.</title>
        <authorList>
            <person name="Stapleton M."/>
            <person name="Carlson J.W."/>
            <person name="Brokstein P."/>
            <person name="Yu C."/>
            <person name="Champe M."/>
            <person name="George R.A."/>
            <person name="Guarin H."/>
            <person name="Kronmiller B."/>
            <person name="Pacleb J.M."/>
            <person name="Park S."/>
            <person name="Wan K.H."/>
            <person name="Rubin G.M."/>
            <person name="Celniker S.E."/>
        </authorList>
    </citation>
    <scope>NUCLEOTIDE SEQUENCE [LARGE SCALE MRNA]</scope>
    <source>
        <strain>Berkeley</strain>
        <tissue>Embryo</tissue>
    </source>
</reference>
<reference key="4">
    <citation type="journal article" date="2022" name="Pigment Cell Melanoma Res.">
        <title>Drosophila yellow-h encodes dopaminechrome tautomerase: A new enzyme in the eumelanin biosynthetic pathway.</title>
        <authorList>
            <person name="Barek H."/>
            <person name="Zhao H."/>
            <person name="Heath K."/>
            <person name="Veraksa A."/>
            <person name="Sugumaran M."/>
        </authorList>
    </citation>
    <scope>FUNCTION</scope>
    <scope>CATALYTIC ACTIVITY</scope>
    <scope>PATHWAY</scope>
</reference>
<sequence>MQSMTIFNIITQLVFLSKTLNGNLSVQPVFQTLDGYEYTSQSFSQNLQSESQLEIVYEWKYLDFLYSTFVQRQQSILNGDFVPKNNLPLGIDVHNNRLFVTTPRWKNGVPASLGTLPFPPKESSPAIKPYPNWEAHGNPNNPDCSKLMSVYRTAVDRCDRIWLIDSGIVNATINLNQICPPKIVVYDLKSDELIVRYNLEASHVKQDSLHSNIVVDIGEDCDDAHAIVSDVWRFGLLVYSLSKNRSWRVTNYNFYPDPFASDFNVYGLNFQWLDGVFGMSIYYNKKIMERVLYFHPMASFKEFMVPMNILLNESVWQTNTQEYAKYFIPIGDRGYNSQSSTSGVTRNGIMFFTQVHQDDIGCWDTSKPYTRAHLGKFHNMENSNLIQFPNDLKVDKEKDQNVWLISNRLPIFLYSNLDYGEVNFRILKANVNKIIRNSVCNPDNSYINTSKSAFVLIEEGQCF</sequence>
<protein>
    <recommendedName>
        <fullName evidence="2">Dopaminechrome tautomerase</fullName>
        <shortName evidence="2">DPT</shortName>
        <ecNumber evidence="1">5.3.3.-</ecNumber>
    </recommendedName>
    <alternativeName>
        <fullName evidence="4">Protein yellow-h</fullName>
    </alternativeName>
</protein>
<evidence type="ECO:0000269" key="1">
    <source>
    </source>
</evidence>
<evidence type="ECO:0000303" key="2">
    <source>
    </source>
</evidence>
<evidence type="ECO:0000305" key="3"/>
<evidence type="ECO:0000312" key="4">
    <source>
        <dbReference type="EMBL" id="AAF59358.2"/>
    </source>
</evidence>
<evidence type="ECO:0000312" key="5">
    <source>
        <dbReference type="FlyBase" id="FBgn0039896"/>
    </source>
</evidence>
<proteinExistence type="evidence at protein level"/>
<accession>Q9V4C0</accession>
<accession>Q8SZ51</accession>
<name>YELLH_DROME</name>
<dbReference type="EC" id="5.3.3.-" evidence="1"/>
<dbReference type="EMBL" id="AE014135">
    <property type="protein sequence ID" value="AAF59358.2"/>
    <property type="molecule type" value="Genomic_DNA"/>
</dbReference>
<dbReference type="EMBL" id="AY071114">
    <property type="protein sequence ID" value="AAL48736.1"/>
    <property type="status" value="ALT_FRAME"/>
    <property type="molecule type" value="mRNA"/>
</dbReference>
<dbReference type="RefSeq" id="NP_651912.3">
    <property type="nucleotide sequence ID" value="NM_143655.4"/>
</dbReference>
<dbReference type="SMR" id="Q9V4C0"/>
<dbReference type="FunCoup" id="Q9V4C0">
    <property type="interactions" value="11"/>
</dbReference>
<dbReference type="STRING" id="7227.FBpp0088184"/>
<dbReference type="PaxDb" id="7227-FBpp0088184"/>
<dbReference type="EnsemblMetazoa" id="FBtr0089115">
    <property type="protein sequence ID" value="FBpp0088184"/>
    <property type="gene ID" value="FBgn0039896"/>
</dbReference>
<dbReference type="GeneID" id="43779"/>
<dbReference type="KEGG" id="dme:Dmel_CG1629"/>
<dbReference type="UCSC" id="CG1629-RA">
    <property type="organism name" value="d. melanogaster"/>
</dbReference>
<dbReference type="AGR" id="FB:FBgn0039896"/>
<dbReference type="CTD" id="43779"/>
<dbReference type="FlyBase" id="FBgn0039896">
    <property type="gene designation" value="yellow-h"/>
</dbReference>
<dbReference type="VEuPathDB" id="VectorBase:FBgn0039896"/>
<dbReference type="eggNOG" id="ENOG502REDV">
    <property type="taxonomic scope" value="Eukaryota"/>
</dbReference>
<dbReference type="GeneTree" id="ENSGT00530000064224"/>
<dbReference type="HOGENOM" id="CLU_031076_2_0_1"/>
<dbReference type="InParanoid" id="Q9V4C0"/>
<dbReference type="OMA" id="MFYTQVH"/>
<dbReference type="OrthoDB" id="7776143at2759"/>
<dbReference type="PhylomeDB" id="Q9V4C0"/>
<dbReference type="UniPathway" id="UPA00785"/>
<dbReference type="BioGRID-ORCS" id="43779">
    <property type="hits" value="0 hits in 1 CRISPR screen"/>
</dbReference>
<dbReference type="GenomeRNAi" id="43779"/>
<dbReference type="PRO" id="PR:Q9V4C0"/>
<dbReference type="Proteomes" id="UP000000803">
    <property type="component" value="Chromosome 4"/>
</dbReference>
<dbReference type="Bgee" id="FBgn0039896">
    <property type="expression patterns" value="Expressed in capitellum (Drosophila) and 59 other cell types or tissues"/>
</dbReference>
<dbReference type="ExpressionAtlas" id="Q9V4C0">
    <property type="expression patterns" value="baseline and differential"/>
</dbReference>
<dbReference type="GO" id="GO:0005576">
    <property type="term" value="C:extracellular region"/>
    <property type="evidence" value="ECO:0000318"/>
    <property type="project" value="GO_Central"/>
</dbReference>
<dbReference type="GO" id="GO:0106417">
    <property type="term" value="F:dopaminechrome tautomerase activity"/>
    <property type="evidence" value="ECO:0000314"/>
    <property type="project" value="FlyBase"/>
</dbReference>
<dbReference type="GO" id="GO:0006583">
    <property type="term" value="P:melanin biosynthetic process from tyrosine"/>
    <property type="evidence" value="ECO:0000314"/>
    <property type="project" value="FlyBase"/>
</dbReference>
<dbReference type="FunFam" id="2.120.10.30:FF:000045">
    <property type="entry name" value="Blast:Protein yellow"/>
    <property type="match status" value="1"/>
</dbReference>
<dbReference type="Gene3D" id="2.120.10.30">
    <property type="entry name" value="TolB, C-terminal domain"/>
    <property type="match status" value="1"/>
</dbReference>
<dbReference type="InterPro" id="IPR011042">
    <property type="entry name" value="6-blade_b-propeller_TolB-like"/>
</dbReference>
<dbReference type="InterPro" id="IPR017996">
    <property type="entry name" value="Royal_jelly/protein_yellow"/>
</dbReference>
<dbReference type="PANTHER" id="PTHR10009:SF13">
    <property type="entry name" value="DOPAMINECHROME TAUTOMERASE"/>
    <property type="match status" value="1"/>
</dbReference>
<dbReference type="PANTHER" id="PTHR10009">
    <property type="entry name" value="PROTEIN YELLOW-RELATED"/>
    <property type="match status" value="1"/>
</dbReference>
<dbReference type="Pfam" id="PF03022">
    <property type="entry name" value="MRJP"/>
    <property type="match status" value="1"/>
</dbReference>
<dbReference type="PRINTS" id="PR01366">
    <property type="entry name" value="ROYALJELLY"/>
</dbReference>
<dbReference type="SUPFAM" id="SSF101898">
    <property type="entry name" value="NHL repeat"/>
    <property type="match status" value="1"/>
</dbReference>
<keyword id="KW-0413">Isomerase</keyword>
<keyword id="KW-0470">Melanin biosynthesis</keyword>
<keyword id="KW-1185">Reference proteome</keyword>
<keyword id="KW-0964">Secreted</keyword>
<keyword id="KW-0732">Signal</keyword>
<feature type="signal peptide" evidence="3">
    <location>
        <begin position="1"/>
        <end status="unknown"/>
    </location>
</feature>
<feature type="chain" id="PRO_0000457040" description="Dopaminechrome tautomerase">
    <location>
        <begin status="unknown"/>
        <end position="463"/>
    </location>
</feature>
<gene>
    <name evidence="2 5" type="primary">yellow-h</name>
    <name evidence="5" type="ORF">CG1629</name>
</gene>